<protein>
    <recommendedName>
        <fullName evidence="1">Ribosome-binding factor A</fullName>
    </recommendedName>
</protein>
<gene>
    <name evidence="1" type="primary">rbfA</name>
    <name type="ordered locus">SA1113</name>
</gene>
<sequence>MSSMRAERVGEQMKKELMDIINNKVKDPRVGFITITDVVLTNDLSQAKVFLTVLGNDKEVENTFKALDKAKGFIKSELGSRMRLRIMPELMYEYDQSIEYGNKIERMIQDLHKQDR</sequence>
<organism>
    <name type="scientific">Staphylococcus aureus (strain N315)</name>
    <dbReference type="NCBI Taxonomy" id="158879"/>
    <lineage>
        <taxon>Bacteria</taxon>
        <taxon>Bacillati</taxon>
        <taxon>Bacillota</taxon>
        <taxon>Bacilli</taxon>
        <taxon>Bacillales</taxon>
        <taxon>Staphylococcaceae</taxon>
        <taxon>Staphylococcus</taxon>
    </lineage>
</organism>
<proteinExistence type="evidence at protein level"/>
<evidence type="ECO:0000255" key="1">
    <source>
        <dbReference type="HAMAP-Rule" id="MF_00003"/>
    </source>
</evidence>
<feature type="chain" id="PRO_0000102732" description="Ribosome-binding factor A">
    <location>
        <begin position="1"/>
        <end position="116"/>
    </location>
</feature>
<comment type="function">
    <text evidence="1">One of several proteins that assist in the late maturation steps of the functional core of the 30S ribosomal subunit. Associates with free 30S ribosomal subunits (but not with 30S subunits that are part of 70S ribosomes or polysomes). Required for efficient processing of 16S rRNA. May interact with the 5'-terminal helix region of 16S rRNA.</text>
</comment>
<comment type="subunit">
    <text evidence="1">Monomer. Binds 30S ribosomal subunits, but not 50S ribosomal subunits or 70S ribosomes.</text>
</comment>
<comment type="subcellular location">
    <subcellularLocation>
        <location evidence="1">Cytoplasm</location>
    </subcellularLocation>
</comment>
<comment type="similarity">
    <text evidence="1">Belongs to the RbfA family.</text>
</comment>
<keyword id="KW-0963">Cytoplasm</keyword>
<keyword id="KW-0690">Ribosome biogenesis</keyword>
<dbReference type="EMBL" id="BA000018">
    <property type="protein sequence ID" value="BAB42365.1"/>
    <property type="molecule type" value="Genomic_DNA"/>
</dbReference>
<dbReference type="PIR" id="A89901">
    <property type="entry name" value="A89901"/>
</dbReference>
<dbReference type="RefSeq" id="WP_000097322.1">
    <property type="nucleotide sequence ID" value="NC_002745.2"/>
</dbReference>
<dbReference type="SMR" id="P65967"/>
<dbReference type="EnsemblBacteria" id="BAB42365">
    <property type="protein sequence ID" value="BAB42365"/>
    <property type="gene ID" value="BAB42365"/>
</dbReference>
<dbReference type="KEGG" id="sau:SA1113"/>
<dbReference type="HOGENOM" id="CLU_089475_6_3_9"/>
<dbReference type="GO" id="GO:0005829">
    <property type="term" value="C:cytosol"/>
    <property type="evidence" value="ECO:0007669"/>
    <property type="project" value="TreeGrafter"/>
</dbReference>
<dbReference type="GO" id="GO:0043024">
    <property type="term" value="F:ribosomal small subunit binding"/>
    <property type="evidence" value="ECO:0007669"/>
    <property type="project" value="TreeGrafter"/>
</dbReference>
<dbReference type="GO" id="GO:0030490">
    <property type="term" value="P:maturation of SSU-rRNA"/>
    <property type="evidence" value="ECO:0007669"/>
    <property type="project" value="UniProtKB-UniRule"/>
</dbReference>
<dbReference type="FunFam" id="3.30.300.20:FF:000009">
    <property type="entry name" value="Ribosome-binding factor A"/>
    <property type="match status" value="1"/>
</dbReference>
<dbReference type="Gene3D" id="3.30.300.20">
    <property type="match status" value="1"/>
</dbReference>
<dbReference type="HAMAP" id="MF_00003">
    <property type="entry name" value="RbfA"/>
    <property type="match status" value="1"/>
</dbReference>
<dbReference type="InterPro" id="IPR015946">
    <property type="entry name" value="KH_dom-like_a/b"/>
</dbReference>
<dbReference type="InterPro" id="IPR000238">
    <property type="entry name" value="RbfA"/>
</dbReference>
<dbReference type="InterPro" id="IPR023799">
    <property type="entry name" value="RbfA_dom_sf"/>
</dbReference>
<dbReference type="InterPro" id="IPR020053">
    <property type="entry name" value="Ribosome-bd_factorA_CS"/>
</dbReference>
<dbReference type="NCBIfam" id="TIGR00082">
    <property type="entry name" value="rbfA"/>
    <property type="match status" value="1"/>
</dbReference>
<dbReference type="PANTHER" id="PTHR33515">
    <property type="entry name" value="RIBOSOME-BINDING FACTOR A, CHLOROPLASTIC-RELATED"/>
    <property type="match status" value="1"/>
</dbReference>
<dbReference type="PANTHER" id="PTHR33515:SF1">
    <property type="entry name" value="RIBOSOME-BINDING FACTOR A, CHLOROPLASTIC-RELATED"/>
    <property type="match status" value="1"/>
</dbReference>
<dbReference type="Pfam" id="PF02033">
    <property type="entry name" value="RBFA"/>
    <property type="match status" value="1"/>
</dbReference>
<dbReference type="SUPFAM" id="SSF89919">
    <property type="entry name" value="Ribosome-binding factor A, RbfA"/>
    <property type="match status" value="1"/>
</dbReference>
<dbReference type="PROSITE" id="PS01319">
    <property type="entry name" value="RBFA"/>
    <property type="match status" value="1"/>
</dbReference>
<accession>P65967</accession>
<accession>Q99UK2</accession>
<name>RBFA_STAAN</name>
<reference key="1">
    <citation type="journal article" date="2001" name="Lancet">
        <title>Whole genome sequencing of meticillin-resistant Staphylococcus aureus.</title>
        <authorList>
            <person name="Kuroda M."/>
            <person name="Ohta T."/>
            <person name="Uchiyama I."/>
            <person name="Baba T."/>
            <person name="Yuzawa H."/>
            <person name="Kobayashi I."/>
            <person name="Cui L."/>
            <person name="Oguchi A."/>
            <person name="Aoki K."/>
            <person name="Nagai Y."/>
            <person name="Lian J.-Q."/>
            <person name="Ito T."/>
            <person name="Kanamori M."/>
            <person name="Matsumaru H."/>
            <person name="Maruyama A."/>
            <person name="Murakami H."/>
            <person name="Hosoyama A."/>
            <person name="Mizutani-Ui Y."/>
            <person name="Takahashi N.K."/>
            <person name="Sawano T."/>
            <person name="Inoue R."/>
            <person name="Kaito C."/>
            <person name="Sekimizu K."/>
            <person name="Hirakawa H."/>
            <person name="Kuhara S."/>
            <person name="Goto S."/>
            <person name="Yabuzaki J."/>
            <person name="Kanehisa M."/>
            <person name="Yamashita A."/>
            <person name="Oshima K."/>
            <person name="Furuya K."/>
            <person name="Yoshino C."/>
            <person name="Shiba T."/>
            <person name="Hattori M."/>
            <person name="Ogasawara N."/>
            <person name="Hayashi H."/>
            <person name="Hiramatsu K."/>
        </authorList>
    </citation>
    <scope>NUCLEOTIDE SEQUENCE [LARGE SCALE GENOMIC DNA]</scope>
    <source>
        <strain>N315</strain>
    </source>
</reference>
<reference key="2">
    <citation type="submission" date="2007-10" db="UniProtKB">
        <title>Shotgun proteomic analysis of total and membrane protein extracts of S. aureus strain N315.</title>
        <authorList>
            <person name="Vaezzadeh A.R."/>
            <person name="Deshusses J."/>
            <person name="Lescuyer P."/>
            <person name="Hochstrasser D.F."/>
        </authorList>
    </citation>
    <scope>IDENTIFICATION BY MASS SPECTROMETRY [LARGE SCALE ANALYSIS]</scope>
    <source>
        <strain>N315</strain>
    </source>
</reference>